<keyword id="KW-0249">Electron transport</keyword>
<keyword id="KW-0349">Heme</keyword>
<keyword id="KW-0408">Iron</keyword>
<keyword id="KW-0449">Lipoprotein</keyword>
<keyword id="KW-0472">Membrane</keyword>
<keyword id="KW-0479">Metal-binding</keyword>
<keyword id="KW-0564">Palmitate</keyword>
<keyword id="KW-0602">Photosynthesis</keyword>
<keyword id="KW-0674">Reaction center</keyword>
<keyword id="KW-1185">Reference proteome</keyword>
<keyword id="KW-0677">Repeat</keyword>
<keyword id="KW-0732">Signal</keyword>
<keyword id="KW-0813">Transport</keyword>
<protein>
    <recommendedName>
        <fullName>Photosynthetic reaction center cytochrome c subunit</fullName>
    </recommendedName>
</protein>
<organism>
    <name type="scientific">Rubrivivax gelatinosus (strain NBRC 100245 / IL144)</name>
    <dbReference type="NCBI Taxonomy" id="983917"/>
    <lineage>
        <taxon>Bacteria</taxon>
        <taxon>Pseudomonadati</taxon>
        <taxon>Pseudomonadota</taxon>
        <taxon>Betaproteobacteria</taxon>
        <taxon>Burkholderiales</taxon>
        <taxon>Sphaerotilaceae</taxon>
        <taxon>Rubrivivax</taxon>
    </lineage>
</organism>
<comment type="function">
    <text evidence="2">The reaction center of purple bacteria contains a tightly bound cytochrome molecule which re-reduces the photo oxidized primary electron donor.</text>
</comment>
<comment type="subunit">
    <text evidence="1">Component of the photosynthetic reaction center composed of protein subunits L (PufL), M (PufM), H (PuhA) and cytochrome C (PufC). The reaction center interacts with light-harvesting antenna complex LH1.</text>
</comment>
<comment type="subcellular location">
    <subcellularLocation>
        <location evidence="2">Cellular chromatophore membrane</location>
        <topology evidence="3">Lipid-anchor</topology>
    </subcellularLocation>
</comment>
<comment type="PTM">
    <text evidence="2">Binds 4 heme groups per subunit.</text>
</comment>
<sequence length="366" mass="39174">MALAVRISTLTVAVTAAALLAGCERPPVDAVQRGYRGTGMQHIVNPRTLAEQIPTQQAPVATPVADNSGPRANQVFQNVKVLGHLSVAEFTRQMAAITEWVAPTEGCNYCHTENLADDSKYQKVVSRRMLEMTQKVNTQWTQHVAATGVTCYTCHRGNPVPKEIWFTAVPQNKRADFIGNLDGQNQAAKVVGLTSLPYDPFTTFLKEETNVRVYGTTALPTGTSKADIKQAEKTYGLMMHFSGALGVNCTYCHNTNGFGSWDNAAPQRATAWYGIRMARDLNNNFMEGLTKTFPAHRLGPTGDVAKINCSTCHQGAYKPLYGAQMAKDYPGLKPAPAAAAASAVEAAPVDAAASAAPVATVATAAK</sequence>
<proteinExistence type="inferred from homology"/>
<dbReference type="EMBL" id="D16822">
    <property type="protein sequence ID" value="BAA04102.1"/>
    <property type="molecule type" value="Genomic_DNA"/>
</dbReference>
<dbReference type="EMBL" id="AP012320">
    <property type="protein sequence ID" value="BAL96700.1"/>
    <property type="molecule type" value="Genomic_DNA"/>
</dbReference>
<dbReference type="PIR" id="G49964">
    <property type="entry name" value="G49964"/>
</dbReference>
<dbReference type="RefSeq" id="WP_014429561.1">
    <property type="nucleotide sequence ID" value="NC_017075.1"/>
</dbReference>
<dbReference type="SMR" id="P51758"/>
<dbReference type="STRING" id="983917.RGE_33610"/>
<dbReference type="KEGG" id="rge:RGE_33610"/>
<dbReference type="PATRIC" id="fig|983917.3.peg.3288"/>
<dbReference type="eggNOG" id="ENOG502Z7SF">
    <property type="taxonomic scope" value="Bacteria"/>
</dbReference>
<dbReference type="HOGENOM" id="CLU_050380_0_0_4"/>
<dbReference type="Proteomes" id="UP000007883">
    <property type="component" value="Chromosome"/>
</dbReference>
<dbReference type="GO" id="GO:0030077">
    <property type="term" value="C:plasma membrane light-harvesting complex"/>
    <property type="evidence" value="ECO:0007669"/>
    <property type="project" value="InterPro"/>
</dbReference>
<dbReference type="GO" id="GO:0042717">
    <property type="term" value="C:plasma membrane-derived chromatophore membrane"/>
    <property type="evidence" value="ECO:0007669"/>
    <property type="project" value="UniProtKB-SubCell"/>
</dbReference>
<dbReference type="GO" id="GO:0009055">
    <property type="term" value="F:electron transfer activity"/>
    <property type="evidence" value="ECO:0007669"/>
    <property type="project" value="InterPro"/>
</dbReference>
<dbReference type="GO" id="GO:0020037">
    <property type="term" value="F:heme binding"/>
    <property type="evidence" value="ECO:0007669"/>
    <property type="project" value="InterPro"/>
</dbReference>
<dbReference type="GO" id="GO:0005506">
    <property type="term" value="F:iron ion binding"/>
    <property type="evidence" value="ECO:0007669"/>
    <property type="project" value="InterPro"/>
</dbReference>
<dbReference type="GO" id="GO:0019684">
    <property type="term" value="P:photosynthesis, light reaction"/>
    <property type="evidence" value="ECO:0007669"/>
    <property type="project" value="InterPro"/>
</dbReference>
<dbReference type="CDD" id="cd09224">
    <property type="entry name" value="CytoC_RC"/>
    <property type="match status" value="1"/>
</dbReference>
<dbReference type="Gene3D" id="1.10.468.10">
    <property type="entry name" value="Photosynthetic Reaction Center, subunit C, domain 2"/>
    <property type="match status" value="2"/>
</dbReference>
<dbReference type="InterPro" id="IPR023119">
    <property type="entry name" value="Multihaem_cyt_PRC_cyt_su-like"/>
</dbReference>
<dbReference type="InterPro" id="IPR036280">
    <property type="entry name" value="Multihaem_cyt_sf"/>
</dbReference>
<dbReference type="InterPro" id="IPR003158">
    <property type="entry name" value="Photosyn_RC_cyt_c-su"/>
</dbReference>
<dbReference type="NCBIfam" id="NF040706">
    <property type="entry name" value="photo_cyt_PufC"/>
    <property type="match status" value="1"/>
</dbReference>
<dbReference type="Pfam" id="PF02276">
    <property type="entry name" value="CytoC_RC"/>
    <property type="match status" value="1"/>
</dbReference>
<dbReference type="PIRSF" id="PIRSF000017">
    <property type="entry name" value="RC_cytochrome"/>
    <property type="match status" value="1"/>
</dbReference>
<dbReference type="SUPFAM" id="SSF48695">
    <property type="entry name" value="Multiheme cytochromes"/>
    <property type="match status" value="1"/>
</dbReference>
<dbReference type="PROSITE" id="PS51008">
    <property type="entry name" value="MULTIHEME_CYTC"/>
    <property type="match status" value="1"/>
</dbReference>
<dbReference type="PROSITE" id="PS51257">
    <property type="entry name" value="PROKAR_LIPOPROTEIN"/>
    <property type="match status" value="1"/>
</dbReference>
<name>CYCR_RUBGI</name>
<evidence type="ECO:0000250" key="1">
    <source>
        <dbReference type="UniProtKB" id="D2Z0P5"/>
    </source>
</evidence>
<evidence type="ECO:0000250" key="2">
    <source>
        <dbReference type="UniProtKB" id="P07173"/>
    </source>
</evidence>
<evidence type="ECO:0000255" key="3">
    <source>
        <dbReference type="PROSITE-ProRule" id="PRU00303"/>
    </source>
</evidence>
<evidence type="ECO:0000305" key="4"/>
<accession>P51758</accession>
<accession>I0HUL3</accession>
<gene>
    <name type="primary">pufC</name>
    <name type="ordered locus">RGE_33610</name>
</gene>
<feature type="signal peptide" evidence="3">
    <location>
        <begin position="1"/>
        <end position="22"/>
    </location>
</feature>
<feature type="chain" id="PRO_0000006550" description="Photosynthetic reaction center cytochrome c subunit">
    <location>
        <begin position="23"/>
        <end position="366"/>
    </location>
</feature>
<feature type="binding site" description="axial binding residue" evidence="2">
    <location>
        <position position="94"/>
    </location>
    <ligand>
        <name>heme</name>
        <dbReference type="ChEBI" id="CHEBI:30413"/>
        <label>1</label>
    </ligand>
    <ligandPart>
        <name>Fe</name>
        <dbReference type="ChEBI" id="CHEBI:18248"/>
    </ligandPart>
</feature>
<feature type="binding site" description="covalent" evidence="2">
    <location>
        <position position="107"/>
    </location>
    <ligand>
        <name>heme</name>
        <dbReference type="ChEBI" id="CHEBI:30413"/>
        <label>1</label>
    </ligand>
</feature>
<feature type="binding site" description="covalent" evidence="2">
    <location>
        <position position="110"/>
    </location>
    <ligand>
        <name>heme</name>
        <dbReference type="ChEBI" id="CHEBI:30413"/>
        <label>1</label>
    </ligand>
</feature>
<feature type="binding site" description="axial binding residue" evidence="2">
    <location>
        <position position="111"/>
    </location>
    <ligand>
        <name>heme</name>
        <dbReference type="ChEBI" id="CHEBI:30413"/>
        <label>1</label>
    </ligand>
    <ligandPart>
        <name>Fe</name>
        <dbReference type="ChEBI" id="CHEBI:18248"/>
    </ligandPart>
</feature>
<feature type="binding site" description="axial binding residue" evidence="2">
    <location>
        <position position="129"/>
    </location>
    <ligand>
        <name>heme</name>
        <dbReference type="ChEBI" id="CHEBI:30413"/>
        <label>2</label>
    </ligand>
    <ligandPart>
        <name>Fe</name>
        <dbReference type="ChEBI" id="CHEBI:18248"/>
    </ligandPart>
</feature>
<feature type="binding site" description="axial binding residue" evidence="2">
    <location>
        <position position="143"/>
    </location>
    <ligand>
        <name>heme</name>
        <dbReference type="ChEBI" id="CHEBI:30413"/>
        <label>4</label>
    </ligand>
    <ligandPart>
        <name>Fe</name>
        <dbReference type="ChEBI" id="CHEBI:18248"/>
    </ligandPart>
</feature>
<feature type="binding site" description="covalent" evidence="2">
    <location>
        <position position="151"/>
    </location>
    <ligand>
        <name>heme</name>
        <dbReference type="ChEBI" id="CHEBI:30413"/>
        <label>2</label>
    </ligand>
</feature>
<feature type="binding site" description="covalent" evidence="2">
    <location>
        <position position="154"/>
    </location>
    <ligand>
        <name>heme</name>
        <dbReference type="ChEBI" id="CHEBI:30413"/>
        <label>2</label>
    </ligand>
</feature>
<feature type="binding site" description="axial binding residue" evidence="2">
    <location>
        <position position="155"/>
    </location>
    <ligand>
        <name>heme</name>
        <dbReference type="ChEBI" id="CHEBI:30413"/>
        <label>2</label>
    </ligand>
    <ligandPart>
        <name>Fe</name>
        <dbReference type="ChEBI" id="CHEBI:18248"/>
    </ligandPart>
</feature>
<feature type="binding site" description="axial binding residue" evidence="2">
    <location>
        <position position="238"/>
    </location>
    <ligand>
        <name>heme</name>
        <dbReference type="ChEBI" id="CHEBI:30413"/>
        <label>3</label>
    </ligand>
    <ligandPart>
        <name>Fe</name>
        <dbReference type="ChEBI" id="CHEBI:18248"/>
    </ligandPart>
</feature>
<feature type="binding site" description="covalent" evidence="2">
    <location>
        <position position="249"/>
    </location>
    <ligand>
        <name>heme</name>
        <dbReference type="ChEBI" id="CHEBI:30413"/>
        <label>3</label>
    </ligand>
</feature>
<feature type="binding site" description="covalent" evidence="2">
    <location>
        <position position="252"/>
    </location>
    <ligand>
        <name>heme</name>
        <dbReference type="ChEBI" id="CHEBI:30413"/>
        <label>3</label>
    </ligand>
</feature>
<feature type="binding site" description="axial binding residue" evidence="2">
    <location>
        <position position="253"/>
    </location>
    <ligand>
        <name>heme</name>
        <dbReference type="ChEBI" id="CHEBI:30413"/>
        <label>3</label>
    </ligand>
    <ligandPart>
        <name>Fe</name>
        <dbReference type="ChEBI" id="CHEBI:18248"/>
    </ligandPart>
</feature>
<feature type="binding site" description="covalent" evidence="2">
    <location>
        <position position="309"/>
    </location>
    <ligand>
        <name>heme</name>
        <dbReference type="ChEBI" id="CHEBI:30413"/>
        <label>4</label>
    </ligand>
</feature>
<feature type="binding site" description="covalent" evidence="2">
    <location>
        <position position="312"/>
    </location>
    <ligand>
        <name>heme</name>
        <dbReference type="ChEBI" id="CHEBI:30413"/>
        <label>4</label>
    </ligand>
</feature>
<feature type="binding site" description="axial binding residue" evidence="2">
    <location>
        <position position="313"/>
    </location>
    <ligand>
        <name>heme</name>
        <dbReference type="ChEBI" id="CHEBI:30413"/>
        <label>4</label>
    </ligand>
    <ligandPart>
        <name>Fe</name>
        <dbReference type="ChEBI" id="CHEBI:18248"/>
    </ligandPart>
</feature>
<feature type="lipid moiety-binding region" description="N-palmitoyl cysteine" evidence="3">
    <location>
        <position position="23"/>
    </location>
</feature>
<feature type="lipid moiety-binding region" description="S-diacylglycerol cysteine" evidence="3">
    <location>
        <position position="23"/>
    </location>
</feature>
<feature type="sequence conflict" description="In Ref. 1; BAA04102." evidence="4" ref="1">
    <original>T</original>
    <variation>N</variation>
    <location>
        <position position="98"/>
    </location>
</feature>
<feature type="sequence conflict" description="In Ref. 1; BAA04102." evidence="4" ref="1">
    <original>Q</original>
    <variation>H</variation>
    <location>
        <position position="142"/>
    </location>
</feature>
<reference key="1">
    <citation type="journal article" date="1994" name="J. Biol. Chem.">
        <title>Primary structure and transcription of genes encoding B870 and photosynthetic reaction center apoproteins from Rubrivivax gelatinosus.</title>
        <authorList>
            <person name="Nagashima K.V.P."/>
            <person name="Matsuura K."/>
            <person name="Ohyama S."/>
            <person name="Shimada K."/>
        </authorList>
    </citation>
    <scope>NUCLEOTIDE SEQUENCE [GENOMIC DNA]</scope>
    <source>
        <strain>NBRC 100245 / IL144</strain>
    </source>
</reference>
<reference key="2">
    <citation type="journal article" date="2012" name="J. Bacteriol.">
        <title>Complete genome sequence of phototrophic betaproteobacterium Rubrivivax gelatinosus IL144.</title>
        <authorList>
            <person name="Nagashima S."/>
            <person name="Kamimura A."/>
            <person name="Shimizu T."/>
            <person name="Nakamura-Isaki S."/>
            <person name="Aono E."/>
            <person name="Sakamoto K."/>
            <person name="Ichikawa N."/>
            <person name="Nakazawa H."/>
            <person name="Sekine M."/>
            <person name="Yamazaki S."/>
            <person name="Fujita N."/>
            <person name="Shimada K."/>
            <person name="Hanada S."/>
            <person name="Nagashima K.V."/>
        </authorList>
    </citation>
    <scope>NUCLEOTIDE SEQUENCE [LARGE SCALE GENOMIC DNA]</scope>
    <source>
        <strain>NBRC 100245 / IL144</strain>
    </source>
</reference>